<feature type="chain" id="PRO_1000012879" description="Lysine--tRNA ligase">
    <location>
        <begin position="1"/>
        <end position="511"/>
    </location>
</feature>
<feature type="binding site" evidence="1">
    <location>
        <position position="421"/>
    </location>
    <ligand>
        <name>Mg(2+)</name>
        <dbReference type="ChEBI" id="CHEBI:18420"/>
        <label>1</label>
    </ligand>
</feature>
<feature type="binding site" evidence="1">
    <location>
        <position position="428"/>
    </location>
    <ligand>
        <name>Mg(2+)</name>
        <dbReference type="ChEBI" id="CHEBI:18420"/>
        <label>1</label>
    </ligand>
</feature>
<feature type="binding site" evidence="1">
    <location>
        <position position="428"/>
    </location>
    <ligand>
        <name>Mg(2+)</name>
        <dbReference type="ChEBI" id="CHEBI:18420"/>
        <label>2</label>
    </ligand>
</feature>
<accession>A6SXF3</accession>
<sequence>MTTHNDDAAAALPQDENKIIAERRAKLSALREQGIAFPNDFRPQHKAADLHEKYDGKTREELEAEPVTVTLAGRMMLKREAGKKAAFATLQDASGAKADGRIQIYATLDLTGEAAMAALHHYDLGDILGVVGTLFKTKTDELTIKVTELRLLTKSLRPLPDKFHGLADQETKYRQRYVDLIMNEDTRRTFKARTAAISSIRRFMAENDFMEVETPMLHTIPGGAAAKPFVTHHNALDMEMFLRIAPELYLKRLVVGGFDRVFEINRNFRNEGVSIRHNPEFTMMEFYAAYTDYKWLMDFTEAVIRQAAIDAHGTATLTYGGRELDLAKPFHRLTIVGAINKYAPQYTNEQLHDAEFIKAELKKFGVKPHAHSGLGALQLALFEETAEAQLWEPTYIIDYPVEVSPLARASDTVAGITERFELFMVGREIANGFSELNDAEDQAARFQAQVAAKDAGDEEAMYYDADYIRALEYGMPPTGGCGIGIDRLMMIITDSPNIRDVLLFPHLRRED</sequence>
<comment type="catalytic activity">
    <reaction evidence="1">
        <text>tRNA(Lys) + L-lysine + ATP = L-lysyl-tRNA(Lys) + AMP + diphosphate</text>
        <dbReference type="Rhea" id="RHEA:20792"/>
        <dbReference type="Rhea" id="RHEA-COMP:9696"/>
        <dbReference type="Rhea" id="RHEA-COMP:9697"/>
        <dbReference type="ChEBI" id="CHEBI:30616"/>
        <dbReference type="ChEBI" id="CHEBI:32551"/>
        <dbReference type="ChEBI" id="CHEBI:33019"/>
        <dbReference type="ChEBI" id="CHEBI:78442"/>
        <dbReference type="ChEBI" id="CHEBI:78529"/>
        <dbReference type="ChEBI" id="CHEBI:456215"/>
        <dbReference type="EC" id="6.1.1.6"/>
    </reaction>
</comment>
<comment type="cofactor">
    <cofactor evidence="1">
        <name>Mg(2+)</name>
        <dbReference type="ChEBI" id="CHEBI:18420"/>
    </cofactor>
    <text evidence="1">Binds 3 Mg(2+) ions per subunit.</text>
</comment>
<comment type="subunit">
    <text evidence="1">Homodimer.</text>
</comment>
<comment type="subcellular location">
    <subcellularLocation>
        <location evidence="1">Cytoplasm</location>
    </subcellularLocation>
</comment>
<comment type="similarity">
    <text evidence="1">Belongs to the class-II aminoacyl-tRNA synthetase family.</text>
</comment>
<dbReference type="EC" id="6.1.1.6" evidence="1"/>
<dbReference type="EMBL" id="CP000269">
    <property type="protein sequence ID" value="ABR88694.1"/>
    <property type="molecule type" value="Genomic_DNA"/>
</dbReference>
<dbReference type="RefSeq" id="WP_012079117.1">
    <property type="nucleotide sequence ID" value="NC_009659.1"/>
</dbReference>
<dbReference type="SMR" id="A6SXF3"/>
<dbReference type="STRING" id="375286.mma_1260"/>
<dbReference type="KEGG" id="mms:mma_1260"/>
<dbReference type="eggNOG" id="COG1190">
    <property type="taxonomic scope" value="Bacteria"/>
</dbReference>
<dbReference type="HOGENOM" id="CLU_008255_6_0_4"/>
<dbReference type="OrthoDB" id="9801152at2"/>
<dbReference type="Proteomes" id="UP000006388">
    <property type="component" value="Chromosome"/>
</dbReference>
<dbReference type="GO" id="GO:0005829">
    <property type="term" value="C:cytosol"/>
    <property type="evidence" value="ECO:0007669"/>
    <property type="project" value="TreeGrafter"/>
</dbReference>
<dbReference type="GO" id="GO:0005524">
    <property type="term" value="F:ATP binding"/>
    <property type="evidence" value="ECO:0007669"/>
    <property type="project" value="UniProtKB-UniRule"/>
</dbReference>
<dbReference type="GO" id="GO:0004824">
    <property type="term" value="F:lysine-tRNA ligase activity"/>
    <property type="evidence" value="ECO:0007669"/>
    <property type="project" value="UniProtKB-UniRule"/>
</dbReference>
<dbReference type="GO" id="GO:0000287">
    <property type="term" value="F:magnesium ion binding"/>
    <property type="evidence" value="ECO:0007669"/>
    <property type="project" value="UniProtKB-UniRule"/>
</dbReference>
<dbReference type="GO" id="GO:0000049">
    <property type="term" value="F:tRNA binding"/>
    <property type="evidence" value="ECO:0007669"/>
    <property type="project" value="TreeGrafter"/>
</dbReference>
<dbReference type="GO" id="GO:0006430">
    <property type="term" value="P:lysyl-tRNA aminoacylation"/>
    <property type="evidence" value="ECO:0007669"/>
    <property type="project" value="UniProtKB-UniRule"/>
</dbReference>
<dbReference type="CDD" id="cd00775">
    <property type="entry name" value="LysRS_core"/>
    <property type="match status" value="1"/>
</dbReference>
<dbReference type="CDD" id="cd04322">
    <property type="entry name" value="LysRS_N"/>
    <property type="match status" value="1"/>
</dbReference>
<dbReference type="FunFam" id="2.40.50.140:FF:000024">
    <property type="entry name" value="Lysine--tRNA ligase"/>
    <property type="match status" value="1"/>
</dbReference>
<dbReference type="FunFam" id="3.30.930.10:FF:000001">
    <property type="entry name" value="Lysine--tRNA ligase"/>
    <property type="match status" value="1"/>
</dbReference>
<dbReference type="Gene3D" id="3.30.930.10">
    <property type="entry name" value="Bira Bifunctional Protein, Domain 2"/>
    <property type="match status" value="1"/>
</dbReference>
<dbReference type="Gene3D" id="2.40.50.140">
    <property type="entry name" value="Nucleic acid-binding proteins"/>
    <property type="match status" value="1"/>
</dbReference>
<dbReference type="HAMAP" id="MF_00252">
    <property type="entry name" value="Lys_tRNA_synth_class2"/>
    <property type="match status" value="1"/>
</dbReference>
<dbReference type="InterPro" id="IPR004364">
    <property type="entry name" value="Aa-tRNA-synt_II"/>
</dbReference>
<dbReference type="InterPro" id="IPR006195">
    <property type="entry name" value="aa-tRNA-synth_II"/>
</dbReference>
<dbReference type="InterPro" id="IPR045864">
    <property type="entry name" value="aa-tRNA-synth_II/BPL/LPL"/>
</dbReference>
<dbReference type="InterPro" id="IPR002313">
    <property type="entry name" value="Lys-tRNA-ligase_II"/>
</dbReference>
<dbReference type="InterPro" id="IPR044136">
    <property type="entry name" value="Lys-tRNA-ligase_II_N"/>
</dbReference>
<dbReference type="InterPro" id="IPR018149">
    <property type="entry name" value="Lys-tRNA-synth_II_C"/>
</dbReference>
<dbReference type="InterPro" id="IPR012340">
    <property type="entry name" value="NA-bd_OB-fold"/>
</dbReference>
<dbReference type="InterPro" id="IPR004365">
    <property type="entry name" value="NA-bd_OB_tRNA"/>
</dbReference>
<dbReference type="NCBIfam" id="TIGR00499">
    <property type="entry name" value="lysS_bact"/>
    <property type="match status" value="1"/>
</dbReference>
<dbReference type="NCBIfam" id="NF001756">
    <property type="entry name" value="PRK00484.1"/>
    <property type="match status" value="1"/>
</dbReference>
<dbReference type="PANTHER" id="PTHR42918:SF15">
    <property type="entry name" value="LYSINE--TRNA LIGASE, CHLOROPLASTIC_MITOCHONDRIAL"/>
    <property type="match status" value="1"/>
</dbReference>
<dbReference type="PANTHER" id="PTHR42918">
    <property type="entry name" value="LYSYL-TRNA SYNTHETASE"/>
    <property type="match status" value="1"/>
</dbReference>
<dbReference type="Pfam" id="PF00152">
    <property type="entry name" value="tRNA-synt_2"/>
    <property type="match status" value="1"/>
</dbReference>
<dbReference type="Pfam" id="PF01336">
    <property type="entry name" value="tRNA_anti-codon"/>
    <property type="match status" value="1"/>
</dbReference>
<dbReference type="PRINTS" id="PR00982">
    <property type="entry name" value="TRNASYNTHLYS"/>
</dbReference>
<dbReference type="SUPFAM" id="SSF55681">
    <property type="entry name" value="Class II aaRS and biotin synthetases"/>
    <property type="match status" value="1"/>
</dbReference>
<dbReference type="SUPFAM" id="SSF50249">
    <property type="entry name" value="Nucleic acid-binding proteins"/>
    <property type="match status" value="1"/>
</dbReference>
<dbReference type="PROSITE" id="PS50862">
    <property type="entry name" value="AA_TRNA_LIGASE_II"/>
    <property type="match status" value="1"/>
</dbReference>
<gene>
    <name evidence="1" type="primary">lysS</name>
    <name type="ordered locus">mma_1260</name>
</gene>
<keyword id="KW-0030">Aminoacyl-tRNA synthetase</keyword>
<keyword id="KW-0067">ATP-binding</keyword>
<keyword id="KW-0963">Cytoplasm</keyword>
<keyword id="KW-0436">Ligase</keyword>
<keyword id="KW-0460">Magnesium</keyword>
<keyword id="KW-0479">Metal-binding</keyword>
<keyword id="KW-0547">Nucleotide-binding</keyword>
<keyword id="KW-0648">Protein biosynthesis</keyword>
<protein>
    <recommendedName>
        <fullName evidence="1">Lysine--tRNA ligase</fullName>
        <ecNumber evidence="1">6.1.1.6</ecNumber>
    </recommendedName>
    <alternativeName>
        <fullName evidence="1">Lysyl-tRNA synthetase</fullName>
        <shortName evidence="1">LysRS</shortName>
    </alternativeName>
</protein>
<reference key="1">
    <citation type="journal article" date="2007" name="PLoS Genet.">
        <title>Genome analysis of Minibacterium massiliensis highlights the convergent evolution of water-living bacteria.</title>
        <authorList>
            <person name="Audic S."/>
            <person name="Robert C."/>
            <person name="Campagna B."/>
            <person name="Parinello H."/>
            <person name="Claverie J.-M."/>
            <person name="Raoult D."/>
            <person name="Drancourt M."/>
        </authorList>
    </citation>
    <scope>NUCLEOTIDE SEQUENCE [LARGE SCALE GENOMIC DNA]</scope>
    <source>
        <strain>Marseille</strain>
    </source>
</reference>
<organism>
    <name type="scientific">Janthinobacterium sp. (strain Marseille)</name>
    <name type="common">Minibacterium massiliensis</name>
    <dbReference type="NCBI Taxonomy" id="375286"/>
    <lineage>
        <taxon>Bacteria</taxon>
        <taxon>Pseudomonadati</taxon>
        <taxon>Pseudomonadota</taxon>
        <taxon>Betaproteobacteria</taxon>
        <taxon>Burkholderiales</taxon>
        <taxon>Oxalobacteraceae</taxon>
        <taxon>Janthinobacterium</taxon>
    </lineage>
</organism>
<evidence type="ECO:0000255" key="1">
    <source>
        <dbReference type="HAMAP-Rule" id="MF_00252"/>
    </source>
</evidence>
<name>SYK_JANMA</name>
<proteinExistence type="inferred from homology"/>